<feature type="chain" id="PRO_1000070616" description="Xanthine-guanine phosphoribosyltransferase">
    <location>
        <begin position="1"/>
        <end position="165"/>
    </location>
</feature>
<feature type="binding site" evidence="1">
    <location>
        <begin position="41"/>
        <end position="42"/>
    </location>
    <ligand>
        <name>5-phospho-alpha-D-ribose 1-diphosphate</name>
        <dbReference type="ChEBI" id="CHEBI:58017"/>
    </ligand>
</feature>
<feature type="binding site" evidence="1">
    <location>
        <begin position="98"/>
        <end position="106"/>
    </location>
    <ligand>
        <name>5-phospho-alpha-D-ribose 1-diphosphate</name>
        <dbReference type="ChEBI" id="CHEBI:58017"/>
    </ligand>
</feature>
<feature type="binding site" evidence="1">
    <location>
        <position position="99"/>
    </location>
    <ligand>
        <name>Mg(2+)</name>
        <dbReference type="ChEBI" id="CHEBI:18420"/>
    </ligand>
</feature>
<feature type="binding site" evidence="1">
    <location>
        <begin position="102"/>
        <end position="106"/>
    </location>
    <ligand>
        <name>GMP</name>
        <dbReference type="ChEBI" id="CHEBI:58115"/>
    </ligand>
</feature>
<feature type="binding site" evidence="1">
    <location>
        <position position="102"/>
    </location>
    <ligand>
        <name>guanine</name>
        <dbReference type="ChEBI" id="CHEBI:16235"/>
    </ligand>
</feature>
<feature type="binding site" evidence="1">
    <location>
        <position position="102"/>
    </location>
    <ligand>
        <name>xanthine</name>
        <dbReference type="ChEBI" id="CHEBI:17712"/>
    </ligand>
</feature>
<feature type="binding site" evidence="1">
    <location>
        <begin position="144"/>
        <end position="145"/>
    </location>
    <ligand>
        <name>GMP</name>
        <dbReference type="ChEBI" id="CHEBI:58115"/>
    </ligand>
</feature>
<feature type="binding site" evidence="1">
    <location>
        <position position="145"/>
    </location>
    <ligand>
        <name>guanine</name>
        <dbReference type="ChEBI" id="CHEBI:16235"/>
    </ligand>
</feature>
<feature type="binding site" evidence="1">
    <location>
        <position position="145"/>
    </location>
    <ligand>
        <name>xanthine</name>
        <dbReference type="ChEBI" id="CHEBI:17712"/>
    </ligand>
</feature>
<dbReference type="EC" id="2.4.2.-" evidence="1"/>
<dbReference type="EC" id="2.4.2.22" evidence="1"/>
<dbReference type="EMBL" id="CP000738">
    <property type="protein sequence ID" value="ABR60232.1"/>
    <property type="molecule type" value="Genomic_DNA"/>
</dbReference>
<dbReference type="RefSeq" id="WP_011975542.1">
    <property type="nucleotide sequence ID" value="NC_009636.1"/>
</dbReference>
<dbReference type="RefSeq" id="YP_001327067.1">
    <property type="nucleotide sequence ID" value="NC_009636.1"/>
</dbReference>
<dbReference type="SMR" id="A6U9A2"/>
<dbReference type="STRING" id="366394.Smed_1386"/>
<dbReference type="GeneID" id="61614219"/>
<dbReference type="KEGG" id="smd:Smed_1386"/>
<dbReference type="PATRIC" id="fig|366394.8.peg.4514"/>
<dbReference type="eggNOG" id="COG2236">
    <property type="taxonomic scope" value="Bacteria"/>
</dbReference>
<dbReference type="HOGENOM" id="CLU_080904_3_0_5"/>
<dbReference type="OrthoDB" id="9789690at2"/>
<dbReference type="UniPathway" id="UPA00602">
    <property type="reaction ID" value="UER00658"/>
</dbReference>
<dbReference type="UniPathway" id="UPA00909">
    <property type="reaction ID" value="UER00887"/>
</dbReference>
<dbReference type="Proteomes" id="UP000001108">
    <property type="component" value="Chromosome"/>
</dbReference>
<dbReference type="GO" id="GO:0005886">
    <property type="term" value="C:plasma membrane"/>
    <property type="evidence" value="ECO:0007669"/>
    <property type="project" value="UniProtKB-SubCell"/>
</dbReference>
<dbReference type="GO" id="GO:0052657">
    <property type="term" value="F:guanine phosphoribosyltransferase activity"/>
    <property type="evidence" value="ECO:0007669"/>
    <property type="project" value="RHEA"/>
</dbReference>
<dbReference type="GO" id="GO:0004422">
    <property type="term" value="F:hypoxanthine phosphoribosyltransferase activity"/>
    <property type="evidence" value="ECO:0007669"/>
    <property type="project" value="RHEA"/>
</dbReference>
<dbReference type="GO" id="GO:0000287">
    <property type="term" value="F:magnesium ion binding"/>
    <property type="evidence" value="ECO:0007669"/>
    <property type="project" value="UniProtKB-UniRule"/>
</dbReference>
<dbReference type="GO" id="GO:0000310">
    <property type="term" value="F:xanthine phosphoribosyltransferase activity"/>
    <property type="evidence" value="ECO:0007669"/>
    <property type="project" value="UniProtKB-UniRule"/>
</dbReference>
<dbReference type="GO" id="GO:0032263">
    <property type="term" value="P:GMP salvage"/>
    <property type="evidence" value="ECO:0007669"/>
    <property type="project" value="UniProtKB-UniRule"/>
</dbReference>
<dbReference type="GO" id="GO:0006166">
    <property type="term" value="P:purine ribonucleoside salvage"/>
    <property type="evidence" value="ECO:0007669"/>
    <property type="project" value="UniProtKB-KW"/>
</dbReference>
<dbReference type="GO" id="GO:0032265">
    <property type="term" value="P:XMP salvage"/>
    <property type="evidence" value="ECO:0007669"/>
    <property type="project" value="UniProtKB-UniRule"/>
</dbReference>
<dbReference type="CDD" id="cd06223">
    <property type="entry name" value="PRTases_typeI"/>
    <property type="match status" value="1"/>
</dbReference>
<dbReference type="Gene3D" id="3.40.50.2020">
    <property type="match status" value="1"/>
</dbReference>
<dbReference type="HAMAP" id="MF_01903">
    <property type="entry name" value="XGPRT"/>
    <property type="match status" value="1"/>
</dbReference>
<dbReference type="InterPro" id="IPR000836">
    <property type="entry name" value="PRibTrfase_dom"/>
</dbReference>
<dbReference type="InterPro" id="IPR029057">
    <property type="entry name" value="PRTase-like"/>
</dbReference>
<dbReference type="InterPro" id="IPR023747">
    <property type="entry name" value="Xanthine_Guanine_PRibTrfase"/>
</dbReference>
<dbReference type="NCBIfam" id="NF006613">
    <property type="entry name" value="PRK09177.1"/>
    <property type="match status" value="1"/>
</dbReference>
<dbReference type="PANTHER" id="PTHR39563">
    <property type="entry name" value="XANTHINE PHOSPHORIBOSYLTRANSFERASE"/>
    <property type="match status" value="1"/>
</dbReference>
<dbReference type="PANTHER" id="PTHR39563:SF1">
    <property type="entry name" value="XANTHINE-GUANINE PHOSPHORIBOSYLTRANSFERASE"/>
    <property type="match status" value="1"/>
</dbReference>
<dbReference type="Pfam" id="PF00156">
    <property type="entry name" value="Pribosyltran"/>
    <property type="match status" value="1"/>
</dbReference>
<dbReference type="SUPFAM" id="SSF53271">
    <property type="entry name" value="PRTase-like"/>
    <property type="match status" value="1"/>
</dbReference>
<name>XGPT_SINMW</name>
<comment type="function">
    <text evidence="1">Purine salvage pathway enzyme that catalyzes the transfer of the ribosyl-5-phosphate group from 5-phospho-alpha-D-ribose 1-diphosphate (PRPP) to the N9 position of the 6-oxopurines guanine and xanthine to form the corresponding ribonucleotides GMP (guanosine 5'-monophosphate) and XMP (xanthosine 5'-monophosphate), with the release of PPi. To a lesser extent, also acts on hypoxanthine.</text>
</comment>
<comment type="catalytic activity">
    <reaction evidence="1">
        <text>GMP + diphosphate = guanine + 5-phospho-alpha-D-ribose 1-diphosphate</text>
        <dbReference type="Rhea" id="RHEA:25424"/>
        <dbReference type="ChEBI" id="CHEBI:16235"/>
        <dbReference type="ChEBI" id="CHEBI:33019"/>
        <dbReference type="ChEBI" id="CHEBI:58017"/>
        <dbReference type="ChEBI" id="CHEBI:58115"/>
    </reaction>
    <physiologicalReaction direction="right-to-left" evidence="1">
        <dbReference type="Rhea" id="RHEA:25426"/>
    </physiologicalReaction>
</comment>
<comment type="catalytic activity">
    <reaction evidence="1">
        <text>XMP + diphosphate = xanthine + 5-phospho-alpha-D-ribose 1-diphosphate</text>
        <dbReference type="Rhea" id="RHEA:10800"/>
        <dbReference type="ChEBI" id="CHEBI:17712"/>
        <dbReference type="ChEBI" id="CHEBI:33019"/>
        <dbReference type="ChEBI" id="CHEBI:57464"/>
        <dbReference type="ChEBI" id="CHEBI:58017"/>
        <dbReference type="EC" id="2.4.2.22"/>
    </reaction>
    <physiologicalReaction direction="right-to-left" evidence="1">
        <dbReference type="Rhea" id="RHEA:10802"/>
    </physiologicalReaction>
</comment>
<comment type="catalytic activity">
    <reaction evidence="1">
        <text>IMP + diphosphate = hypoxanthine + 5-phospho-alpha-D-ribose 1-diphosphate</text>
        <dbReference type="Rhea" id="RHEA:17973"/>
        <dbReference type="ChEBI" id="CHEBI:17368"/>
        <dbReference type="ChEBI" id="CHEBI:33019"/>
        <dbReference type="ChEBI" id="CHEBI:58017"/>
        <dbReference type="ChEBI" id="CHEBI:58053"/>
    </reaction>
    <physiologicalReaction direction="right-to-left" evidence="1">
        <dbReference type="Rhea" id="RHEA:17975"/>
    </physiologicalReaction>
</comment>
<comment type="cofactor">
    <cofactor evidence="1">
        <name>Mg(2+)</name>
        <dbReference type="ChEBI" id="CHEBI:18420"/>
    </cofactor>
</comment>
<comment type="pathway">
    <text evidence="1">Purine metabolism; GMP biosynthesis via salvage pathway; GMP from guanine: step 1/1.</text>
</comment>
<comment type="pathway">
    <text evidence="1">Purine metabolism; XMP biosynthesis via salvage pathway; XMP from xanthine: step 1/1.</text>
</comment>
<comment type="subunit">
    <text evidence="1">Homotetramer.</text>
</comment>
<comment type="subcellular location">
    <subcellularLocation>
        <location evidence="1">Cell inner membrane</location>
        <topology evidence="1">Peripheral membrane protein</topology>
    </subcellularLocation>
</comment>
<comment type="similarity">
    <text evidence="1">Belongs to the purine/pyrimidine phosphoribosyltransferase family. XGPT subfamily.</text>
</comment>
<proteinExistence type="inferred from homology"/>
<accession>A6U9A2</accession>
<protein>
    <recommendedName>
        <fullName evidence="1">Xanthine-guanine phosphoribosyltransferase</fullName>
        <shortName evidence="1">XGPRT</shortName>
        <ecNumber evidence="1">2.4.2.-</ecNumber>
        <ecNumber evidence="1">2.4.2.22</ecNumber>
    </recommendedName>
    <alternativeName>
        <fullName evidence="1">Xanthine phosphoribosyltransferase</fullName>
    </alternativeName>
</protein>
<organism>
    <name type="scientific">Sinorhizobium medicae (strain WSM419)</name>
    <name type="common">Ensifer medicae</name>
    <dbReference type="NCBI Taxonomy" id="366394"/>
    <lineage>
        <taxon>Bacteria</taxon>
        <taxon>Pseudomonadati</taxon>
        <taxon>Pseudomonadota</taxon>
        <taxon>Alphaproteobacteria</taxon>
        <taxon>Hyphomicrobiales</taxon>
        <taxon>Rhizobiaceae</taxon>
        <taxon>Sinorhizobium/Ensifer group</taxon>
        <taxon>Sinorhizobium</taxon>
    </lineage>
</organism>
<reference key="1">
    <citation type="submission" date="2007-06" db="EMBL/GenBank/DDBJ databases">
        <title>Complete sequence of Sinorhizobium medicae WSM419 chromosome.</title>
        <authorList>
            <consortium name="US DOE Joint Genome Institute"/>
            <person name="Copeland A."/>
            <person name="Lucas S."/>
            <person name="Lapidus A."/>
            <person name="Barry K."/>
            <person name="Glavina del Rio T."/>
            <person name="Dalin E."/>
            <person name="Tice H."/>
            <person name="Pitluck S."/>
            <person name="Chain P."/>
            <person name="Malfatti S."/>
            <person name="Shin M."/>
            <person name="Vergez L."/>
            <person name="Schmutz J."/>
            <person name="Larimer F."/>
            <person name="Land M."/>
            <person name="Hauser L."/>
            <person name="Kyrpides N."/>
            <person name="Mikhailova N."/>
            <person name="Reeve W.G."/>
            <person name="Richardson P."/>
        </authorList>
    </citation>
    <scope>NUCLEOTIDE SEQUENCE [LARGE SCALE GENOMIC DNA]</scope>
    <source>
        <strain>WSM419</strain>
    </source>
</reference>
<evidence type="ECO:0000255" key="1">
    <source>
        <dbReference type="HAMAP-Rule" id="MF_01903"/>
    </source>
</evidence>
<sequence>MSLPEKAFPVSWDQFHRDARALAWRLADNGQEWRAMVCITRGGLVPAAIVSRELNIRMIETVCIASYHDYDTQGQMKVLKSISPEIAKSGGEGVLIVDDLTDTGKTAAEVRAMLPKAHFAAVYAKPKGRPLVDTFVTEVSQDTWIYFPWDLGFTYQEPIAKGTRG</sequence>
<keyword id="KW-0997">Cell inner membrane</keyword>
<keyword id="KW-1003">Cell membrane</keyword>
<keyword id="KW-0328">Glycosyltransferase</keyword>
<keyword id="KW-0460">Magnesium</keyword>
<keyword id="KW-0472">Membrane</keyword>
<keyword id="KW-0479">Metal-binding</keyword>
<keyword id="KW-0660">Purine salvage</keyword>
<keyword id="KW-0808">Transferase</keyword>
<gene>
    <name evidence="1" type="primary">gpt</name>
    <name type="ordered locus">Smed_1386</name>
</gene>